<comment type="function">
    <text evidence="4">Mediates visceral muscle contractile activity (myotropic activity).</text>
</comment>
<comment type="subcellular location">
    <subcellularLocation>
        <location evidence="4">Secreted</location>
    </subcellularLocation>
</comment>
<comment type="mass spectrometry"/>
<comment type="similarity">
    <text evidence="1">Belongs to the periviscerokinin family.</text>
</comment>
<keyword id="KW-0027">Amidation</keyword>
<keyword id="KW-0903">Direct protein sequencing</keyword>
<keyword id="KW-0527">Neuropeptide</keyword>
<keyword id="KW-0964">Secreted</keyword>
<name>PVK21_PSEBJ</name>
<evidence type="ECO:0000255" key="1"/>
<evidence type="ECO:0000269" key="2">
    <source>
    </source>
</evidence>
<evidence type="ECO:0000269" key="3">
    <source>
    </source>
</evidence>
<evidence type="ECO:0000305" key="4"/>
<dbReference type="GO" id="GO:0005576">
    <property type="term" value="C:extracellular region"/>
    <property type="evidence" value="ECO:0007669"/>
    <property type="project" value="UniProtKB-SubCell"/>
</dbReference>
<dbReference type="GO" id="GO:0007218">
    <property type="term" value="P:neuropeptide signaling pathway"/>
    <property type="evidence" value="ECO:0007669"/>
    <property type="project" value="UniProtKB-KW"/>
</dbReference>
<dbReference type="InterPro" id="IPR013231">
    <property type="entry name" value="Periviscerokinin"/>
</dbReference>
<dbReference type="Pfam" id="PF08259">
    <property type="entry name" value="Periviscerokin"/>
    <property type="match status" value="1"/>
</dbReference>
<feature type="peptide" id="PRO_0000044276" description="Periviscerokinin-2.1">
    <location>
        <begin position="1"/>
        <end position="12"/>
    </location>
</feature>
<feature type="modified residue" description="Valine amide" evidence="2 3">
    <location>
        <position position="12"/>
    </location>
</feature>
<reference evidence="4" key="1">
    <citation type="journal article" date="2005" name="Peptides">
        <title>Peptidomics of neurohemal organs from species of the cockroach family Blattidae: how do neuropeptides of closely related species differ?</title>
        <authorList>
            <person name="Predel R."/>
            <person name="Gaede G."/>
        </authorList>
    </citation>
    <scope>PROTEIN SEQUENCE</scope>
    <scope>MASS SPECTROMETRY</scope>
    <scope>AMIDATION AT VAL-12</scope>
    <source>
        <tissue evidence="2">Abdominal perisympathetic organs</tissue>
    </source>
</reference>
<reference key="2">
    <citation type="journal article" date="2009" name="BMC Evol. Biol.">
        <title>A proteomic approach for studying insect phylogeny: CAPA peptides of ancient insect taxa (Dictyoptera, Blattoptera) as a test case.</title>
        <authorList>
            <person name="Roth S."/>
            <person name="Fromm B."/>
            <person name="Gaede G."/>
            <person name="Predel R."/>
        </authorList>
    </citation>
    <scope>PROTEIN SEQUENCE</scope>
    <scope>AMIDATION AT VAL-12</scope>
    <source>
        <tissue>Abdominal perisympathetic organs</tissue>
    </source>
</reference>
<accession>P84441</accession>
<sequence>GSSSGLISMPRV</sequence>
<protein>
    <recommendedName>
        <fullName>Periviscerokinin-2.1</fullName>
    </recommendedName>
    <alternativeName>
        <fullName>Pea-PVK-2-like peptide</fullName>
    </alternativeName>
    <alternativeName>
        <fullName>Periviscerokinin-3</fullName>
        <shortName>PseBi-PVK-3</shortName>
    </alternativeName>
</protein>
<proteinExistence type="evidence at protein level"/>
<organism>
    <name type="scientific">Pseudoderopeltis cf. bimaculata JT-2004</name>
    <name type="common">Harlequin cockroach</name>
    <dbReference type="NCBI Taxonomy" id="304880"/>
    <lineage>
        <taxon>Eukaryota</taxon>
        <taxon>Metazoa</taxon>
        <taxon>Ecdysozoa</taxon>
        <taxon>Arthropoda</taxon>
        <taxon>Hexapoda</taxon>
        <taxon>Insecta</taxon>
        <taxon>Pterygota</taxon>
        <taxon>Neoptera</taxon>
        <taxon>Polyneoptera</taxon>
        <taxon>Dictyoptera</taxon>
        <taxon>Blattodea</taxon>
        <taxon>Blattoidea</taxon>
        <taxon>Blattidae</taxon>
        <taxon>Blattinae</taxon>
        <taxon>Pseudoderopeltis</taxon>
    </lineage>
</organism>